<protein>
    <recommendedName>
        <fullName evidence="1">Membrane protein insertase YidC 2</fullName>
    </recommendedName>
    <alternativeName>
        <fullName evidence="1">Foldase YidC 2</fullName>
    </alternativeName>
    <alternativeName>
        <fullName evidence="1">Membrane integrase YidC 2</fullName>
    </alternativeName>
    <alternativeName>
        <fullName evidence="1">Membrane protein YidC 2</fullName>
    </alternativeName>
</protein>
<keyword id="KW-1003">Cell membrane</keyword>
<keyword id="KW-0143">Chaperone</keyword>
<keyword id="KW-0449">Lipoprotein</keyword>
<keyword id="KW-0472">Membrane</keyword>
<keyword id="KW-0564">Palmitate</keyword>
<keyword id="KW-0653">Protein transport</keyword>
<keyword id="KW-0732">Signal</keyword>
<keyword id="KW-0812">Transmembrane</keyword>
<keyword id="KW-1133">Transmembrane helix</keyword>
<keyword id="KW-0813">Transport</keyword>
<name>YIDC2_STRA3</name>
<evidence type="ECO:0000255" key="1">
    <source>
        <dbReference type="HAMAP-Rule" id="MF_01811"/>
    </source>
</evidence>
<evidence type="ECO:0000256" key="2">
    <source>
        <dbReference type="SAM" id="MobiDB-lite"/>
    </source>
</evidence>
<organism>
    <name type="scientific">Streptococcus agalactiae serotype III (strain NEM316)</name>
    <dbReference type="NCBI Taxonomy" id="211110"/>
    <lineage>
        <taxon>Bacteria</taxon>
        <taxon>Bacillati</taxon>
        <taxon>Bacillota</taxon>
        <taxon>Bacilli</taxon>
        <taxon>Lactobacillales</taxon>
        <taxon>Streptococcaceae</taxon>
        <taxon>Streptococcus</taxon>
    </lineage>
</organism>
<accession>Q8E3U9</accession>
<dbReference type="EMBL" id="AL766852">
    <property type="protein sequence ID" value="CAD47316.1"/>
    <property type="molecule type" value="Genomic_DNA"/>
</dbReference>
<dbReference type="SMR" id="Q8E3U9"/>
<dbReference type="KEGG" id="san:gbs1657"/>
<dbReference type="eggNOG" id="COG0706">
    <property type="taxonomic scope" value="Bacteria"/>
</dbReference>
<dbReference type="HOGENOM" id="CLU_036138_5_1_9"/>
<dbReference type="Proteomes" id="UP000000823">
    <property type="component" value="Chromosome"/>
</dbReference>
<dbReference type="GO" id="GO:0005886">
    <property type="term" value="C:plasma membrane"/>
    <property type="evidence" value="ECO:0007669"/>
    <property type="project" value="UniProtKB-SubCell"/>
</dbReference>
<dbReference type="GO" id="GO:0032977">
    <property type="term" value="F:membrane insertase activity"/>
    <property type="evidence" value="ECO:0007669"/>
    <property type="project" value="InterPro"/>
</dbReference>
<dbReference type="GO" id="GO:0051205">
    <property type="term" value="P:protein insertion into membrane"/>
    <property type="evidence" value="ECO:0007669"/>
    <property type="project" value="TreeGrafter"/>
</dbReference>
<dbReference type="GO" id="GO:0015031">
    <property type="term" value="P:protein transport"/>
    <property type="evidence" value="ECO:0007669"/>
    <property type="project" value="UniProtKB-KW"/>
</dbReference>
<dbReference type="CDD" id="cd20070">
    <property type="entry name" value="5TM_YidC_Alb3"/>
    <property type="match status" value="1"/>
</dbReference>
<dbReference type="HAMAP" id="MF_01811">
    <property type="entry name" value="YidC_type2"/>
    <property type="match status" value="1"/>
</dbReference>
<dbReference type="InterPro" id="IPR001708">
    <property type="entry name" value="YidC/ALB3/OXA1/COX18"/>
</dbReference>
<dbReference type="InterPro" id="IPR028055">
    <property type="entry name" value="YidC/Oxa/ALB_C"/>
</dbReference>
<dbReference type="InterPro" id="IPR023060">
    <property type="entry name" value="YidC/YidC1/YidC2_Firmicutes"/>
</dbReference>
<dbReference type="InterPro" id="IPR047196">
    <property type="entry name" value="YidC_ALB_C"/>
</dbReference>
<dbReference type="NCBIfam" id="NF002687">
    <property type="entry name" value="PRK02463.1"/>
    <property type="match status" value="1"/>
</dbReference>
<dbReference type="NCBIfam" id="TIGR03592">
    <property type="entry name" value="yidC_oxa1_cterm"/>
    <property type="match status" value="1"/>
</dbReference>
<dbReference type="PANTHER" id="PTHR12428:SF65">
    <property type="entry name" value="CYTOCHROME C OXIDASE ASSEMBLY PROTEIN COX18, MITOCHONDRIAL"/>
    <property type="match status" value="1"/>
</dbReference>
<dbReference type="PANTHER" id="PTHR12428">
    <property type="entry name" value="OXA1"/>
    <property type="match status" value="1"/>
</dbReference>
<dbReference type="Pfam" id="PF02096">
    <property type="entry name" value="60KD_IMP"/>
    <property type="match status" value="1"/>
</dbReference>
<dbReference type="PROSITE" id="PS51257">
    <property type="entry name" value="PROKAR_LIPOPROTEIN"/>
    <property type="match status" value="1"/>
</dbReference>
<comment type="function">
    <text evidence="1">Required for the insertion and/or proper folding and/or complex formation of integral membrane proteins into the membrane. Involved in integration of membrane proteins that insert both dependently and independently of the Sec translocase complex, as well as at least some lipoproteins.</text>
</comment>
<comment type="subcellular location">
    <subcellularLocation>
        <location evidence="1">Cell membrane</location>
        <topology evidence="1">Multi-pass membrane protein</topology>
    </subcellularLocation>
</comment>
<comment type="similarity">
    <text evidence="1">Belongs to the OXA1/ALB3/YidC family. Type 2 subfamily.</text>
</comment>
<gene>
    <name evidence="1" type="primary">yidC2</name>
    <name type="ordered locus">gbs1657</name>
</gene>
<proteinExistence type="inferred from homology"/>
<sequence>MKKTLKRILFSSLSLSILLLLTGCVSVDKAGKPYGVIWNTLGVPMANLITYFAQHQGLGFGVAIIIVTIIVRVIILPLGLYQSWKASYQAEKMAYFKPLFEPINERLRNAKTQEEKLAAQTELMTAQRENGLSMFGGIGCLPLLIQMPFFSAIFFAARYTPGVSSATFLGLNLGQKSLTLTVIIAILYFVQSWLSMQGVPDEQRQQMKTMMYVMPIAMVFMSISLPASVALYWFIGGIFSIIQQLVTTYVLKPKLRRKVEEEYTKNPPKAYKSNNARKDVTSSTKTTESNQAIITSKKTNRNAGKQKRRG</sequence>
<feature type="signal peptide" evidence="1">
    <location>
        <begin position="1"/>
        <end position="23"/>
    </location>
</feature>
<feature type="chain" id="PRO_0000020401" description="Membrane protein insertase YidC 2">
    <location>
        <begin position="24"/>
        <end position="310"/>
    </location>
</feature>
<feature type="transmembrane region" description="Helical" evidence="1">
    <location>
        <begin position="33"/>
        <end position="53"/>
    </location>
</feature>
<feature type="transmembrane region" description="Helical" evidence="1">
    <location>
        <begin position="58"/>
        <end position="78"/>
    </location>
</feature>
<feature type="transmembrane region" description="Helical" evidence="1">
    <location>
        <begin position="135"/>
        <end position="155"/>
    </location>
</feature>
<feature type="transmembrane region" description="Helical" evidence="1">
    <location>
        <begin position="180"/>
        <end position="200"/>
    </location>
</feature>
<feature type="transmembrane region" description="Helical" evidence="1">
    <location>
        <begin position="219"/>
        <end position="239"/>
    </location>
</feature>
<feature type="region of interest" description="Disordered" evidence="2">
    <location>
        <begin position="262"/>
        <end position="310"/>
    </location>
</feature>
<feature type="compositionally biased region" description="Polar residues" evidence="2">
    <location>
        <begin position="281"/>
        <end position="297"/>
    </location>
</feature>
<feature type="compositionally biased region" description="Basic residues" evidence="2">
    <location>
        <begin position="298"/>
        <end position="310"/>
    </location>
</feature>
<feature type="lipid moiety-binding region" description="N-palmitoyl cysteine" evidence="1">
    <location>
        <position position="24"/>
    </location>
</feature>
<feature type="lipid moiety-binding region" description="S-diacylglycerol cysteine" evidence="1">
    <location>
        <position position="24"/>
    </location>
</feature>
<reference key="1">
    <citation type="journal article" date="2002" name="Mol. Microbiol.">
        <title>Genome sequence of Streptococcus agalactiae, a pathogen causing invasive neonatal disease.</title>
        <authorList>
            <person name="Glaser P."/>
            <person name="Rusniok C."/>
            <person name="Buchrieser C."/>
            <person name="Chevalier F."/>
            <person name="Frangeul L."/>
            <person name="Msadek T."/>
            <person name="Zouine M."/>
            <person name="Couve E."/>
            <person name="Lalioui L."/>
            <person name="Poyart C."/>
            <person name="Trieu-Cuot P."/>
            <person name="Kunst F."/>
        </authorList>
    </citation>
    <scope>NUCLEOTIDE SEQUENCE [LARGE SCALE GENOMIC DNA]</scope>
    <source>
        <strain>NEM316</strain>
    </source>
</reference>